<dbReference type="EMBL" id="CP000302">
    <property type="protein sequence ID" value="ABE53484.1"/>
    <property type="molecule type" value="Genomic_DNA"/>
</dbReference>
<dbReference type="RefSeq" id="WP_011494651.1">
    <property type="nucleotide sequence ID" value="NC_007954.1"/>
</dbReference>
<dbReference type="SMR" id="Q12SU2"/>
<dbReference type="STRING" id="318161.Sden_0187"/>
<dbReference type="GeneID" id="90572190"/>
<dbReference type="KEGG" id="sdn:Sden_0187"/>
<dbReference type="eggNOG" id="COG0098">
    <property type="taxonomic scope" value="Bacteria"/>
</dbReference>
<dbReference type="HOGENOM" id="CLU_065898_2_2_6"/>
<dbReference type="OrthoDB" id="9809045at2"/>
<dbReference type="Proteomes" id="UP000001982">
    <property type="component" value="Chromosome"/>
</dbReference>
<dbReference type="GO" id="GO:0015935">
    <property type="term" value="C:small ribosomal subunit"/>
    <property type="evidence" value="ECO:0007669"/>
    <property type="project" value="InterPro"/>
</dbReference>
<dbReference type="GO" id="GO:0019843">
    <property type="term" value="F:rRNA binding"/>
    <property type="evidence" value="ECO:0007669"/>
    <property type="project" value="UniProtKB-UniRule"/>
</dbReference>
<dbReference type="GO" id="GO:0003735">
    <property type="term" value="F:structural constituent of ribosome"/>
    <property type="evidence" value="ECO:0007669"/>
    <property type="project" value="InterPro"/>
</dbReference>
<dbReference type="GO" id="GO:0006412">
    <property type="term" value="P:translation"/>
    <property type="evidence" value="ECO:0007669"/>
    <property type="project" value="UniProtKB-UniRule"/>
</dbReference>
<dbReference type="FunFam" id="3.30.160.20:FF:000001">
    <property type="entry name" value="30S ribosomal protein S5"/>
    <property type="match status" value="1"/>
</dbReference>
<dbReference type="FunFam" id="3.30.230.10:FF:000002">
    <property type="entry name" value="30S ribosomal protein S5"/>
    <property type="match status" value="1"/>
</dbReference>
<dbReference type="Gene3D" id="3.30.160.20">
    <property type="match status" value="1"/>
</dbReference>
<dbReference type="Gene3D" id="3.30.230.10">
    <property type="match status" value="1"/>
</dbReference>
<dbReference type="HAMAP" id="MF_01307_B">
    <property type="entry name" value="Ribosomal_uS5_B"/>
    <property type="match status" value="1"/>
</dbReference>
<dbReference type="InterPro" id="IPR020568">
    <property type="entry name" value="Ribosomal_Su5_D2-typ_SF"/>
</dbReference>
<dbReference type="InterPro" id="IPR000851">
    <property type="entry name" value="Ribosomal_uS5"/>
</dbReference>
<dbReference type="InterPro" id="IPR005712">
    <property type="entry name" value="Ribosomal_uS5_bac-type"/>
</dbReference>
<dbReference type="InterPro" id="IPR005324">
    <property type="entry name" value="Ribosomal_uS5_C"/>
</dbReference>
<dbReference type="InterPro" id="IPR013810">
    <property type="entry name" value="Ribosomal_uS5_N"/>
</dbReference>
<dbReference type="InterPro" id="IPR018192">
    <property type="entry name" value="Ribosomal_uS5_N_CS"/>
</dbReference>
<dbReference type="InterPro" id="IPR014721">
    <property type="entry name" value="Ribsml_uS5_D2-typ_fold_subgr"/>
</dbReference>
<dbReference type="NCBIfam" id="TIGR01021">
    <property type="entry name" value="rpsE_bact"/>
    <property type="match status" value="1"/>
</dbReference>
<dbReference type="PANTHER" id="PTHR48277">
    <property type="entry name" value="MITOCHONDRIAL RIBOSOMAL PROTEIN S5"/>
    <property type="match status" value="1"/>
</dbReference>
<dbReference type="PANTHER" id="PTHR48277:SF1">
    <property type="entry name" value="MITOCHONDRIAL RIBOSOMAL PROTEIN S5"/>
    <property type="match status" value="1"/>
</dbReference>
<dbReference type="Pfam" id="PF00333">
    <property type="entry name" value="Ribosomal_S5"/>
    <property type="match status" value="1"/>
</dbReference>
<dbReference type="Pfam" id="PF03719">
    <property type="entry name" value="Ribosomal_S5_C"/>
    <property type="match status" value="1"/>
</dbReference>
<dbReference type="SUPFAM" id="SSF54768">
    <property type="entry name" value="dsRNA-binding domain-like"/>
    <property type="match status" value="1"/>
</dbReference>
<dbReference type="SUPFAM" id="SSF54211">
    <property type="entry name" value="Ribosomal protein S5 domain 2-like"/>
    <property type="match status" value="1"/>
</dbReference>
<dbReference type="PROSITE" id="PS00585">
    <property type="entry name" value="RIBOSOMAL_S5"/>
    <property type="match status" value="1"/>
</dbReference>
<dbReference type="PROSITE" id="PS50881">
    <property type="entry name" value="S5_DSRBD"/>
    <property type="match status" value="1"/>
</dbReference>
<sequence>MAKLEAQQKDDLQEKLIAVNRVSKVVKGGRIFSFTALTVVGDGNGKIGYGYGKAREVPAAIQKAMEKARRNMVTVELNAGTLHHPVKGRHTGSKVYMQPASQGTGIIAGGAMRAVLEVAGVHNVLSKAYGSTNPINIVRATVDALVHMKSPAQIAAKRGLNVDEIRG</sequence>
<feature type="chain" id="PRO_0000323195" description="Small ribosomal subunit protein uS5">
    <location>
        <begin position="1"/>
        <end position="167"/>
    </location>
</feature>
<feature type="domain" description="S5 DRBM" evidence="1">
    <location>
        <begin position="12"/>
        <end position="75"/>
    </location>
</feature>
<keyword id="KW-1185">Reference proteome</keyword>
<keyword id="KW-0687">Ribonucleoprotein</keyword>
<keyword id="KW-0689">Ribosomal protein</keyword>
<keyword id="KW-0694">RNA-binding</keyword>
<keyword id="KW-0699">rRNA-binding</keyword>
<gene>
    <name evidence="1" type="primary">rpsE</name>
    <name type="ordered locus">Sden_0187</name>
</gene>
<accession>Q12SU2</accession>
<reference key="1">
    <citation type="submission" date="2006-03" db="EMBL/GenBank/DDBJ databases">
        <title>Complete sequence of Shewanella denitrificans OS217.</title>
        <authorList>
            <consortium name="US DOE Joint Genome Institute"/>
            <person name="Copeland A."/>
            <person name="Lucas S."/>
            <person name="Lapidus A."/>
            <person name="Barry K."/>
            <person name="Detter J.C."/>
            <person name="Glavina del Rio T."/>
            <person name="Hammon N."/>
            <person name="Israni S."/>
            <person name="Dalin E."/>
            <person name="Tice H."/>
            <person name="Pitluck S."/>
            <person name="Brettin T."/>
            <person name="Bruce D."/>
            <person name="Han C."/>
            <person name="Tapia R."/>
            <person name="Gilna P."/>
            <person name="Kiss H."/>
            <person name="Schmutz J."/>
            <person name="Larimer F."/>
            <person name="Land M."/>
            <person name="Hauser L."/>
            <person name="Kyrpides N."/>
            <person name="Lykidis A."/>
            <person name="Richardson P."/>
        </authorList>
    </citation>
    <scope>NUCLEOTIDE SEQUENCE [LARGE SCALE GENOMIC DNA]</scope>
    <source>
        <strain>OS217 / ATCC BAA-1090 / DSM 15013</strain>
    </source>
</reference>
<evidence type="ECO:0000255" key="1">
    <source>
        <dbReference type="HAMAP-Rule" id="MF_01307"/>
    </source>
</evidence>
<evidence type="ECO:0000305" key="2"/>
<comment type="function">
    <text evidence="1">With S4 and S12 plays an important role in translational accuracy.</text>
</comment>
<comment type="function">
    <text evidence="1">Located at the back of the 30S subunit body where it stabilizes the conformation of the head with respect to the body.</text>
</comment>
<comment type="subunit">
    <text evidence="1">Part of the 30S ribosomal subunit. Contacts proteins S4 and S8.</text>
</comment>
<comment type="domain">
    <text>The N-terminal domain interacts with the head of the 30S subunit; the C-terminal domain interacts with the body and contacts protein S4. The interaction surface between S4 and S5 is involved in control of translational fidelity.</text>
</comment>
<comment type="similarity">
    <text evidence="1">Belongs to the universal ribosomal protein uS5 family.</text>
</comment>
<organism>
    <name type="scientific">Shewanella denitrificans (strain OS217 / ATCC BAA-1090 / DSM 15013)</name>
    <dbReference type="NCBI Taxonomy" id="318161"/>
    <lineage>
        <taxon>Bacteria</taxon>
        <taxon>Pseudomonadati</taxon>
        <taxon>Pseudomonadota</taxon>
        <taxon>Gammaproteobacteria</taxon>
        <taxon>Alteromonadales</taxon>
        <taxon>Shewanellaceae</taxon>
        <taxon>Shewanella</taxon>
    </lineage>
</organism>
<name>RS5_SHEDO</name>
<protein>
    <recommendedName>
        <fullName evidence="1">Small ribosomal subunit protein uS5</fullName>
    </recommendedName>
    <alternativeName>
        <fullName evidence="2">30S ribosomal protein S5</fullName>
    </alternativeName>
</protein>
<proteinExistence type="inferred from homology"/>